<proteinExistence type="inferred from homology"/>
<feature type="chain" id="PRO_0000110875" description="Aspartate--tRNA ligase">
    <location>
        <begin position="1"/>
        <end position="590"/>
    </location>
</feature>
<feature type="region of interest" description="Aspartate" evidence="1">
    <location>
        <begin position="199"/>
        <end position="202"/>
    </location>
</feature>
<feature type="binding site" evidence="1">
    <location>
        <position position="175"/>
    </location>
    <ligand>
        <name>L-aspartate</name>
        <dbReference type="ChEBI" id="CHEBI:29991"/>
    </ligand>
</feature>
<feature type="binding site" evidence="1">
    <location>
        <begin position="221"/>
        <end position="223"/>
    </location>
    <ligand>
        <name>ATP</name>
        <dbReference type="ChEBI" id="CHEBI:30616"/>
    </ligand>
</feature>
<feature type="binding site" evidence="1">
    <location>
        <position position="221"/>
    </location>
    <ligand>
        <name>L-aspartate</name>
        <dbReference type="ChEBI" id="CHEBI:29991"/>
    </ligand>
</feature>
<feature type="binding site" evidence="1">
    <location>
        <position position="230"/>
    </location>
    <ligand>
        <name>ATP</name>
        <dbReference type="ChEBI" id="CHEBI:30616"/>
    </ligand>
</feature>
<feature type="binding site" evidence="1">
    <location>
        <position position="449"/>
    </location>
    <ligand>
        <name>L-aspartate</name>
        <dbReference type="ChEBI" id="CHEBI:29991"/>
    </ligand>
</feature>
<feature type="binding site" evidence="1">
    <location>
        <position position="483"/>
    </location>
    <ligand>
        <name>ATP</name>
        <dbReference type="ChEBI" id="CHEBI:30616"/>
    </ligand>
</feature>
<feature type="binding site" evidence="1">
    <location>
        <position position="490"/>
    </location>
    <ligand>
        <name>L-aspartate</name>
        <dbReference type="ChEBI" id="CHEBI:29991"/>
    </ligand>
</feature>
<feature type="binding site" evidence="1">
    <location>
        <begin position="535"/>
        <end position="538"/>
    </location>
    <ligand>
        <name>ATP</name>
        <dbReference type="ChEBI" id="CHEBI:30616"/>
    </ligand>
</feature>
<name>SYD_GEOKA</name>
<gene>
    <name evidence="1" type="primary">aspS</name>
    <name type="ordered locus">GK2572</name>
</gene>
<protein>
    <recommendedName>
        <fullName evidence="1">Aspartate--tRNA ligase</fullName>
        <ecNumber evidence="1">6.1.1.12</ecNumber>
    </recommendedName>
    <alternativeName>
        <fullName evidence="1">Aspartyl-tRNA synthetase</fullName>
        <shortName evidence="1">AspRS</shortName>
    </alternativeName>
</protein>
<comment type="function">
    <text evidence="1">Catalyzes the attachment of L-aspartate to tRNA(Asp) in a two-step reaction: L-aspartate is first activated by ATP to form Asp-AMP and then transferred to the acceptor end of tRNA(Asp).</text>
</comment>
<comment type="catalytic activity">
    <reaction evidence="1">
        <text>tRNA(Asp) + L-aspartate + ATP = L-aspartyl-tRNA(Asp) + AMP + diphosphate</text>
        <dbReference type="Rhea" id="RHEA:19649"/>
        <dbReference type="Rhea" id="RHEA-COMP:9660"/>
        <dbReference type="Rhea" id="RHEA-COMP:9678"/>
        <dbReference type="ChEBI" id="CHEBI:29991"/>
        <dbReference type="ChEBI" id="CHEBI:30616"/>
        <dbReference type="ChEBI" id="CHEBI:33019"/>
        <dbReference type="ChEBI" id="CHEBI:78442"/>
        <dbReference type="ChEBI" id="CHEBI:78516"/>
        <dbReference type="ChEBI" id="CHEBI:456215"/>
        <dbReference type="EC" id="6.1.1.12"/>
    </reaction>
</comment>
<comment type="subunit">
    <text evidence="1">Homodimer.</text>
</comment>
<comment type="subcellular location">
    <subcellularLocation>
        <location evidence="1">Cytoplasm</location>
    </subcellularLocation>
</comment>
<comment type="similarity">
    <text evidence="1">Belongs to the class-II aminoacyl-tRNA synthetase family. Type 1 subfamily.</text>
</comment>
<accession>Q5KWS9</accession>
<dbReference type="EC" id="6.1.1.12" evidence="1"/>
<dbReference type="EMBL" id="BA000043">
    <property type="protein sequence ID" value="BAD76857.1"/>
    <property type="molecule type" value="Genomic_DNA"/>
</dbReference>
<dbReference type="RefSeq" id="WP_011232049.1">
    <property type="nucleotide sequence ID" value="NC_006510.1"/>
</dbReference>
<dbReference type="SMR" id="Q5KWS9"/>
<dbReference type="STRING" id="235909.GK2572"/>
<dbReference type="GeneID" id="32064475"/>
<dbReference type="KEGG" id="gka:GK2572"/>
<dbReference type="PATRIC" id="fig|235909.7.peg.2752"/>
<dbReference type="eggNOG" id="COG0173">
    <property type="taxonomic scope" value="Bacteria"/>
</dbReference>
<dbReference type="HOGENOM" id="CLU_014330_3_2_9"/>
<dbReference type="Proteomes" id="UP000001172">
    <property type="component" value="Chromosome"/>
</dbReference>
<dbReference type="GO" id="GO:0005737">
    <property type="term" value="C:cytoplasm"/>
    <property type="evidence" value="ECO:0007669"/>
    <property type="project" value="UniProtKB-SubCell"/>
</dbReference>
<dbReference type="GO" id="GO:0004815">
    <property type="term" value="F:aspartate-tRNA ligase activity"/>
    <property type="evidence" value="ECO:0007669"/>
    <property type="project" value="UniProtKB-UniRule"/>
</dbReference>
<dbReference type="GO" id="GO:0005524">
    <property type="term" value="F:ATP binding"/>
    <property type="evidence" value="ECO:0007669"/>
    <property type="project" value="UniProtKB-UniRule"/>
</dbReference>
<dbReference type="GO" id="GO:0140096">
    <property type="term" value="F:catalytic activity, acting on a protein"/>
    <property type="evidence" value="ECO:0007669"/>
    <property type="project" value="UniProtKB-ARBA"/>
</dbReference>
<dbReference type="GO" id="GO:0003676">
    <property type="term" value="F:nucleic acid binding"/>
    <property type="evidence" value="ECO:0007669"/>
    <property type="project" value="InterPro"/>
</dbReference>
<dbReference type="GO" id="GO:0016740">
    <property type="term" value="F:transferase activity"/>
    <property type="evidence" value="ECO:0007669"/>
    <property type="project" value="UniProtKB-ARBA"/>
</dbReference>
<dbReference type="GO" id="GO:0006422">
    <property type="term" value="P:aspartyl-tRNA aminoacylation"/>
    <property type="evidence" value="ECO:0007669"/>
    <property type="project" value="UniProtKB-UniRule"/>
</dbReference>
<dbReference type="CDD" id="cd00777">
    <property type="entry name" value="AspRS_core"/>
    <property type="match status" value="1"/>
</dbReference>
<dbReference type="CDD" id="cd04317">
    <property type="entry name" value="EcAspRS_like_N"/>
    <property type="match status" value="1"/>
</dbReference>
<dbReference type="Gene3D" id="3.30.930.10">
    <property type="entry name" value="Bira Bifunctional Protein, Domain 2"/>
    <property type="match status" value="1"/>
</dbReference>
<dbReference type="Gene3D" id="3.30.1360.30">
    <property type="entry name" value="GAD-like domain"/>
    <property type="match status" value="1"/>
</dbReference>
<dbReference type="Gene3D" id="2.40.50.140">
    <property type="entry name" value="Nucleic acid-binding proteins"/>
    <property type="match status" value="1"/>
</dbReference>
<dbReference type="HAMAP" id="MF_00044">
    <property type="entry name" value="Asp_tRNA_synth_type1"/>
    <property type="match status" value="1"/>
</dbReference>
<dbReference type="InterPro" id="IPR004364">
    <property type="entry name" value="Aa-tRNA-synt_II"/>
</dbReference>
<dbReference type="InterPro" id="IPR006195">
    <property type="entry name" value="aa-tRNA-synth_II"/>
</dbReference>
<dbReference type="InterPro" id="IPR045864">
    <property type="entry name" value="aa-tRNA-synth_II/BPL/LPL"/>
</dbReference>
<dbReference type="InterPro" id="IPR004524">
    <property type="entry name" value="Asp-tRNA-ligase_1"/>
</dbReference>
<dbReference type="InterPro" id="IPR047089">
    <property type="entry name" value="Asp-tRNA-ligase_1_N"/>
</dbReference>
<dbReference type="InterPro" id="IPR002312">
    <property type="entry name" value="Asp/Asn-tRNA-synth_IIb"/>
</dbReference>
<dbReference type="InterPro" id="IPR047090">
    <property type="entry name" value="AspRS_core"/>
</dbReference>
<dbReference type="InterPro" id="IPR004115">
    <property type="entry name" value="GAD-like_sf"/>
</dbReference>
<dbReference type="InterPro" id="IPR029351">
    <property type="entry name" value="GAD_dom"/>
</dbReference>
<dbReference type="InterPro" id="IPR012340">
    <property type="entry name" value="NA-bd_OB-fold"/>
</dbReference>
<dbReference type="InterPro" id="IPR004365">
    <property type="entry name" value="NA-bd_OB_tRNA"/>
</dbReference>
<dbReference type="NCBIfam" id="TIGR00459">
    <property type="entry name" value="aspS_bact"/>
    <property type="match status" value="1"/>
</dbReference>
<dbReference type="NCBIfam" id="NF001750">
    <property type="entry name" value="PRK00476.1"/>
    <property type="match status" value="1"/>
</dbReference>
<dbReference type="PANTHER" id="PTHR22594:SF5">
    <property type="entry name" value="ASPARTATE--TRNA LIGASE, MITOCHONDRIAL"/>
    <property type="match status" value="1"/>
</dbReference>
<dbReference type="PANTHER" id="PTHR22594">
    <property type="entry name" value="ASPARTYL/LYSYL-TRNA SYNTHETASE"/>
    <property type="match status" value="1"/>
</dbReference>
<dbReference type="Pfam" id="PF02938">
    <property type="entry name" value="GAD"/>
    <property type="match status" value="1"/>
</dbReference>
<dbReference type="Pfam" id="PF00152">
    <property type="entry name" value="tRNA-synt_2"/>
    <property type="match status" value="1"/>
</dbReference>
<dbReference type="Pfam" id="PF01336">
    <property type="entry name" value="tRNA_anti-codon"/>
    <property type="match status" value="1"/>
</dbReference>
<dbReference type="PRINTS" id="PR01042">
    <property type="entry name" value="TRNASYNTHASP"/>
</dbReference>
<dbReference type="SUPFAM" id="SSF55681">
    <property type="entry name" value="Class II aaRS and biotin synthetases"/>
    <property type="match status" value="1"/>
</dbReference>
<dbReference type="SUPFAM" id="SSF55261">
    <property type="entry name" value="GAD domain-like"/>
    <property type="match status" value="1"/>
</dbReference>
<dbReference type="SUPFAM" id="SSF50249">
    <property type="entry name" value="Nucleic acid-binding proteins"/>
    <property type="match status" value="1"/>
</dbReference>
<dbReference type="PROSITE" id="PS50862">
    <property type="entry name" value="AA_TRNA_LIGASE_II"/>
    <property type="match status" value="1"/>
</dbReference>
<organism>
    <name type="scientific">Geobacillus kaustophilus (strain HTA426)</name>
    <dbReference type="NCBI Taxonomy" id="235909"/>
    <lineage>
        <taxon>Bacteria</taxon>
        <taxon>Bacillati</taxon>
        <taxon>Bacillota</taxon>
        <taxon>Bacilli</taxon>
        <taxon>Bacillales</taxon>
        <taxon>Anoxybacillaceae</taxon>
        <taxon>Geobacillus</taxon>
        <taxon>Geobacillus thermoleovorans group</taxon>
    </lineage>
</organism>
<sequence length="590" mass="66013">MERTYYCGEVPETAVGERVVLKGWVQKRRDLGGLIFIDLRDRTGIVQVVASPDVSAEALAAAERVRSEYVLSVEGTVVARAPETVNPNIATGSIEIQAERIEIINEAKTPPFSISDDTDAAEDVRLKYRYLDLRRPVMFQTLALRHKITKTVRDFLDSERFLEIETPMLTKSTPEGARDYLVPSRVHPGEFYALPQSPQIFKQLLMVGGVERYYQIARCFRDEDLRADRQPEFTQIDIEMSFIEQKDIMDLTERMMAAVVKAAKGIDIPRPFPRITYDEAMSRYGSDKPDIRFGLELVDVSEIVRNSAFQVFARAVKEGGQVKAINAKGAAPRYSRKDIDALGEFAGRYGAKGLAWLKAEGEELKGPIAKFFTDEEQAALRRALAVEDGDLLLFVADEKAIVAAALGALRLKLGKELGLIDEAKLAFLWVTDWPLLEYDEEEGRYYAAHHPFTMPVRDDIPLLETNPSAVRAQAYDLVLNGYELGGGSLRIFERDVQEKMFRALGFSEEEARRQFGFLLEAFEYGTPPHGGIALGLDRLVMLLAGRTNLRDTIAFPKTASASCLLTEAPGPVSDKQLEELHLAVVLPENE</sequence>
<evidence type="ECO:0000255" key="1">
    <source>
        <dbReference type="HAMAP-Rule" id="MF_00044"/>
    </source>
</evidence>
<reference key="1">
    <citation type="journal article" date="2004" name="Nucleic Acids Res.">
        <title>Thermoadaptation trait revealed by the genome sequence of thermophilic Geobacillus kaustophilus.</title>
        <authorList>
            <person name="Takami H."/>
            <person name="Takaki Y."/>
            <person name="Chee G.-J."/>
            <person name="Nishi S."/>
            <person name="Shimamura S."/>
            <person name="Suzuki H."/>
            <person name="Matsui S."/>
            <person name="Uchiyama I."/>
        </authorList>
    </citation>
    <scope>NUCLEOTIDE SEQUENCE [LARGE SCALE GENOMIC DNA]</scope>
    <source>
        <strain>HTA426</strain>
    </source>
</reference>
<keyword id="KW-0030">Aminoacyl-tRNA synthetase</keyword>
<keyword id="KW-0067">ATP-binding</keyword>
<keyword id="KW-0963">Cytoplasm</keyword>
<keyword id="KW-0436">Ligase</keyword>
<keyword id="KW-0547">Nucleotide-binding</keyword>
<keyword id="KW-0648">Protein biosynthesis</keyword>
<keyword id="KW-1185">Reference proteome</keyword>